<sequence>MKALLDLFKQVQQEEVFDAIKIGLASPDKIRSWSFGEVKKPETINYRTFKPERDGLFCAKIFGPIKDYECLCGKYKRLKHRGVICEKCGVEVTLAKVRRERMGHIELASPVAHIWFLKSLPSRLGMVLDMTLRDIERVLYFEAYVVIEPGMTPLKARQIMTEEDYYNKVEEYGDEFRAEMGAEGVRELLRAINIDEQVETLRTELKNTGSEAKIKKYAKRLKVLEAFQRSGIKPEWMILEVLPVLPPELRPLVPLDGGRFATSDLNDLYRRVINRNNRLKRLLELKAPEIIVRNEKRMLQEAVDSLLDNGRRGKAMTGANKRPLKSLADMIKGKGGRFRQNLLGKRVDYSGRSVIVVGPTLKLHQCGLPKLMALELFKPFIFNKLEVMGVATTIKAAKKEVENQTPVVWDILEEVIREHPVMLNRAPTLHRLGIQAFEPVLIEGKAIQLHPLVCAAFNADFDGDQMAVHVPLSLEAQMEARTLMLASNNVLFPANGDPSIVPSQDIVLGLYYATREAVNAKGEGLSFTGVSEVIRAYENKEVELASRVNVRITEMVRNEDTSEGAPQFVPKISLYATTVGRAILSEILPHGLPFSVLNKPLKKKEISRLINTAFRKCGLRATVVFADQLMQSGFRLATRAGISICVDDMLVPPQKETIVGDAAKKVKEYDRQYMSGLVTAQERYNNVVDIWSATSEAVGKAMMEQLSTEPVIDRDGNETRQESFNSIYMMADSGARGSAVQIRQLAGMRGLMAKPDGSIIETPITANFREGLNVLQYFISTHGARKGLADTALKTANSGYLTRRLVDVTQDLVVVEDDCGTSNGVAMKALVEGGEVVEALRDRILGRVAVADVVNPETQETLYESGTLLDETAVEEIERLGIDEVRVRTPLTCETRYGLCAACYGRDLGRGSLVNVGEAVGVIAAQSIGEPGTQLTMRTFHIGGAASRAAVASSVEAKSNGIVRFTATMRYVTNAKGEQIVISRSGEALITDDIGRERERHKIPYGATLLQLDGATIKAGTQLATWDPMTRPIITEYGGTVKFENVEEGVTVAKQIDDVTGLSTLVVIDVKRRGSQASKSVRPQVKLLDANGEEVKIPGTEHAVQIGFQVGALITVKDGQQVQVGEVLARIPTEAQKTRDITGGLPRVAELFEARSPKDAGILAEVTGTTSFGKDTKGKQRLVITDLEGNQHEFLIAKEKQVLVHDAQVVNKGEMIVDGPADPHDILRLQGIEALSRYIVDEVQDVYRLQGVKINDKHIEVIVRQMLRRVQITDNGDTRFIPGEQVERSDMLDENDRMIAEGKRPASYDNVLLGITKASLSTDSFISAASFQETTRVLTEAAIMGKRDDLRGLKENVIVGRLIPAGTGLAFHKARKAKEMSDRERFDQIAAEEAFDFGTPSAPAEEPQHPAAE</sequence>
<organism>
    <name type="scientific">Burkholderia vietnamiensis (strain G4 / LMG 22486)</name>
    <name type="common">Burkholderia cepacia (strain R1808)</name>
    <dbReference type="NCBI Taxonomy" id="269482"/>
    <lineage>
        <taxon>Bacteria</taxon>
        <taxon>Pseudomonadati</taxon>
        <taxon>Pseudomonadota</taxon>
        <taxon>Betaproteobacteria</taxon>
        <taxon>Burkholderiales</taxon>
        <taxon>Burkholderiaceae</taxon>
        <taxon>Burkholderia</taxon>
        <taxon>Burkholderia cepacia complex</taxon>
    </lineage>
</organism>
<accession>A4JAN3</accession>
<proteinExistence type="inferred from homology"/>
<feature type="chain" id="PRO_0000353317" description="DNA-directed RNA polymerase subunit beta'">
    <location>
        <begin position="1"/>
        <end position="1413"/>
    </location>
</feature>
<feature type="binding site" evidence="1">
    <location>
        <position position="70"/>
    </location>
    <ligand>
        <name>Zn(2+)</name>
        <dbReference type="ChEBI" id="CHEBI:29105"/>
        <label>1</label>
    </ligand>
</feature>
<feature type="binding site" evidence="1">
    <location>
        <position position="72"/>
    </location>
    <ligand>
        <name>Zn(2+)</name>
        <dbReference type="ChEBI" id="CHEBI:29105"/>
        <label>1</label>
    </ligand>
</feature>
<feature type="binding site" evidence="1">
    <location>
        <position position="85"/>
    </location>
    <ligand>
        <name>Zn(2+)</name>
        <dbReference type="ChEBI" id="CHEBI:29105"/>
        <label>1</label>
    </ligand>
</feature>
<feature type="binding site" evidence="1">
    <location>
        <position position="88"/>
    </location>
    <ligand>
        <name>Zn(2+)</name>
        <dbReference type="ChEBI" id="CHEBI:29105"/>
        <label>1</label>
    </ligand>
</feature>
<feature type="binding site" evidence="1">
    <location>
        <position position="460"/>
    </location>
    <ligand>
        <name>Mg(2+)</name>
        <dbReference type="ChEBI" id="CHEBI:18420"/>
    </ligand>
</feature>
<feature type="binding site" evidence="1">
    <location>
        <position position="462"/>
    </location>
    <ligand>
        <name>Mg(2+)</name>
        <dbReference type="ChEBI" id="CHEBI:18420"/>
    </ligand>
</feature>
<feature type="binding site" evidence="1">
    <location>
        <position position="464"/>
    </location>
    <ligand>
        <name>Mg(2+)</name>
        <dbReference type="ChEBI" id="CHEBI:18420"/>
    </ligand>
</feature>
<feature type="binding site" evidence="1">
    <location>
        <position position="819"/>
    </location>
    <ligand>
        <name>Zn(2+)</name>
        <dbReference type="ChEBI" id="CHEBI:29105"/>
        <label>2</label>
    </ligand>
</feature>
<feature type="binding site" evidence="1">
    <location>
        <position position="893"/>
    </location>
    <ligand>
        <name>Zn(2+)</name>
        <dbReference type="ChEBI" id="CHEBI:29105"/>
        <label>2</label>
    </ligand>
</feature>
<feature type="binding site" evidence="1">
    <location>
        <position position="900"/>
    </location>
    <ligand>
        <name>Zn(2+)</name>
        <dbReference type="ChEBI" id="CHEBI:29105"/>
        <label>2</label>
    </ligand>
</feature>
<feature type="binding site" evidence="1">
    <location>
        <position position="903"/>
    </location>
    <ligand>
        <name>Zn(2+)</name>
        <dbReference type="ChEBI" id="CHEBI:29105"/>
        <label>2</label>
    </ligand>
</feature>
<keyword id="KW-0240">DNA-directed RNA polymerase</keyword>
<keyword id="KW-0460">Magnesium</keyword>
<keyword id="KW-0479">Metal-binding</keyword>
<keyword id="KW-0548">Nucleotidyltransferase</keyword>
<keyword id="KW-0804">Transcription</keyword>
<keyword id="KW-0808">Transferase</keyword>
<keyword id="KW-0862">Zinc</keyword>
<comment type="function">
    <text evidence="1">DNA-dependent RNA polymerase catalyzes the transcription of DNA into RNA using the four ribonucleoside triphosphates as substrates.</text>
</comment>
<comment type="catalytic activity">
    <reaction evidence="1">
        <text>RNA(n) + a ribonucleoside 5'-triphosphate = RNA(n+1) + diphosphate</text>
        <dbReference type="Rhea" id="RHEA:21248"/>
        <dbReference type="Rhea" id="RHEA-COMP:14527"/>
        <dbReference type="Rhea" id="RHEA-COMP:17342"/>
        <dbReference type="ChEBI" id="CHEBI:33019"/>
        <dbReference type="ChEBI" id="CHEBI:61557"/>
        <dbReference type="ChEBI" id="CHEBI:140395"/>
        <dbReference type="EC" id="2.7.7.6"/>
    </reaction>
</comment>
<comment type="cofactor">
    <cofactor evidence="1">
        <name>Mg(2+)</name>
        <dbReference type="ChEBI" id="CHEBI:18420"/>
    </cofactor>
    <text evidence="1">Binds 1 Mg(2+) ion per subunit.</text>
</comment>
<comment type="cofactor">
    <cofactor evidence="1">
        <name>Zn(2+)</name>
        <dbReference type="ChEBI" id="CHEBI:29105"/>
    </cofactor>
    <text evidence="1">Binds 2 Zn(2+) ions per subunit.</text>
</comment>
<comment type="subunit">
    <text evidence="1">The RNAP catalytic core consists of 2 alpha, 1 beta, 1 beta' and 1 omega subunit. When a sigma factor is associated with the core the holoenzyme is formed, which can initiate transcription.</text>
</comment>
<comment type="similarity">
    <text evidence="1">Belongs to the RNA polymerase beta' chain family.</text>
</comment>
<evidence type="ECO:0000255" key="1">
    <source>
        <dbReference type="HAMAP-Rule" id="MF_01322"/>
    </source>
</evidence>
<dbReference type="EC" id="2.7.7.6" evidence="1"/>
<dbReference type="EMBL" id="CP000614">
    <property type="protein sequence ID" value="ABO53336.1"/>
    <property type="molecule type" value="Genomic_DNA"/>
</dbReference>
<dbReference type="SMR" id="A4JAN3"/>
<dbReference type="KEGG" id="bvi:Bcep1808_0323"/>
<dbReference type="eggNOG" id="COG0086">
    <property type="taxonomic scope" value="Bacteria"/>
</dbReference>
<dbReference type="HOGENOM" id="CLU_000524_3_1_4"/>
<dbReference type="Proteomes" id="UP000002287">
    <property type="component" value="Chromosome 1"/>
</dbReference>
<dbReference type="GO" id="GO:0000428">
    <property type="term" value="C:DNA-directed RNA polymerase complex"/>
    <property type="evidence" value="ECO:0007669"/>
    <property type="project" value="UniProtKB-KW"/>
</dbReference>
<dbReference type="GO" id="GO:0003677">
    <property type="term" value="F:DNA binding"/>
    <property type="evidence" value="ECO:0007669"/>
    <property type="project" value="UniProtKB-UniRule"/>
</dbReference>
<dbReference type="GO" id="GO:0003899">
    <property type="term" value="F:DNA-directed RNA polymerase activity"/>
    <property type="evidence" value="ECO:0007669"/>
    <property type="project" value="UniProtKB-UniRule"/>
</dbReference>
<dbReference type="GO" id="GO:0000287">
    <property type="term" value="F:magnesium ion binding"/>
    <property type="evidence" value="ECO:0007669"/>
    <property type="project" value="UniProtKB-UniRule"/>
</dbReference>
<dbReference type="GO" id="GO:0008270">
    <property type="term" value="F:zinc ion binding"/>
    <property type="evidence" value="ECO:0007669"/>
    <property type="project" value="UniProtKB-UniRule"/>
</dbReference>
<dbReference type="GO" id="GO:0006351">
    <property type="term" value="P:DNA-templated transcription"/>
    <property type="evidence" value="ECO:0007669"/>
    <property type="project" value="UniProtKB-UniRule"/>
</dbReference>
<dbReference type="CDD" id="cd02655">
    <property type="entry name" value="RNAP_beta'_C"/>
    <property type="match status" value="1"/>
</dbReference>
<dbReference type="CDD" id="cd01609">
    <property type="entry name" value="RNAP_beta'_N"/>
    <property type="match status" value="1"/>
</dbReference>
<dbReference type="FunFam" id="1.10.132.30:FF:000003">
    <property type="entry name" value="DNA-directed RNA polymerase subunit beta"/>
    <property type="match status" value="1"/>
</dbReference>
<dbReference type="FunFam" id="1.10.150.390:FF:000002">
    <property type="entry name" value="DNA-directed RNA polymerase subunit beta"/>
    <property type="match status" value="1"/>
</dbReference>
<dbReference type="FunFam" id="4.10.860.120:FF:000001">
    <property type="entry name" value="DNA-directed RNA polymerase subunit beta"/>
    <property type="match status" value="1"/>
</dbReference>
<dbReference type="Gene3D" id="1.10.132.30">
    <property type="match status" value="1"/>
</dbReference>
<dbReference type="Gene3D" id="1.10.150.390">
    <property type="match status" value="1"/>
</dbReference>
<dbReference type="Gene3D" id="1.10.1790.20">
    <property type="match status" value="1"/>
</dbReference>
<dbReference type="Gene3D" id="1.10.40.90">
    <property type="match status" value="1"/>
</dbReference>
<dbReference type="Gene3D" id="2.40.40.20">
    <property type="match status" value="1"/>
</dbReference>
<dbReference type="Gene3D" id="2.40.50.100">
    <property type="match status" value="3"/>
</dbReference>
<dbReference type="Gene3D" id="4.10.860.120">
    <property type="entry name" value="RNA polymerase II, clamp domain"/>
    <property type="match status" value="1"/>
</dbReference>
<dbReference type="Gene3D" id="1.10.274.100">
    <property type="entry name" value="RNA polymerase Rpb1, domain 3"/>
    <property type="match status" value="1"/>
</dbReference>
<dbReference type="HAMAP" id="MF_01322">
    <property type="entry name" value="RNApol_bact_RpoC"/>
    <property type="match status" value="1"/>
</dbReference>
<dbReference type="InterPro" id="IPR045867">
    <property type="entry name" value="DNA-dir_RpoC_beta_prime"/>
</dbReference>
<dbReference type="InterPro" id="IPR012754">
    <property type="entry name" value="DNA-dir_RpoC_beta_prime_bact"/>
</dbReference>
<dbReference type="InterPro" id="IPR000722">
    <property type="entry name" value="RNA_pol_asu"/>
</dbReference>
<dbReference type="InterPro" id="IPR006592">
    <property type="entry name" value="RNA_pol_N"/>
</dbReference>
<dbReference type="InterPro" id="IPR007080">
    <property type="entry name" value="RNA_pol_Rpb1_1"/>
</dbReference>
<dbReference type="InterPro" id="IPR007066">
    <property type="entry name" value="RNA_pol_Rpb1_3"/>
</dbReference>
<dbReference type="InterPro" id="IPR042102">
    <property type="entry name" value="RNA_pol_Rpb1_3_sf"/>
</dbReference>
<dbReference type="InterPro" id="IPR007083">
    <property type="entry name" value="RNA_pol_Rpb1_4"/>
</dbReference>
<dbReference type="InterPro" id="IPR007081">
    <property type="entry name" value="RNA_pol_Rpb1_5"/>
</dbReference>
<dbReference type="InterPro" id="IPR044893">
    <property type="entry name" value="RNA_pol_Rpb1_clamp_domain"/>
</dbReference>
<dbReference type="InterPro" id="IPR038120">
    <property type="entry name" value="Rpb1_funnel_sf"/>
</dbReference>
<dbReference type="NCBIfam" id="TIGR02386">
    <property type="entry name" value="rpoC_TIGR"/>
    <property type="match status" value="1"/>
</dbReference>
<dbReference type="PANTHER" id="PTHR19376">
    <property type="entry name" value="DNA-DIRECTED RNA POLYMERASE"/>
    <property type="match status" value="1"/>
</dbReference>
<dbReference type="PANTHER" id="PTHR19376:SF54">
    <property type="entry name" value="DNA-DIRECTED RNA POLYMERASE SUBUNIT BETA"/>
    <property type="match status" value="1"/>
</dbReference>
<dbReference type="Pfam" id="PF04997">
    <property type="entry name" value="RNA_pol_Rpb1_1"/>
    <property type="match status" value="1"/>
</dbReference>
<dbReference type="Pfam" id="PF00623">
    <property type="entry name" value="RNA_pol_Rpb1_2"/>
    <property type="match status" value="2"/>
</dbReference>
<dbReference type="Pfam" id="PF04983">
    <property type="entry name" value="RNA_pol_Rpb1_3"/>
    <property type="match status" value="1"/>
</dbReference>
<dbReference type="Pfam" id="PF05000">
    <property type="entry name" value="RNA_pol_Rpb1_4"/>
    <property type="match status" value="1"/>
</dbReference>
<dbReference type="Pfam" id="PF04998">
    <property type="entry name" value="RNA_pol_Rpb1_5"/>
    <property type="match status" value="1"/>
</dbReference>
<dbReference type="SMART" id="SM00663">
    <property type="entry name" value="RPOLA_N"/>
    <property type="match status" value="1"/>
</dbReference>
<dbReference type="SUPFAM" id="SSF64484">
    <property type="entry name" value="beta and beta-prime subunits of DNA dependent RNA-polymerase"/>
    <property type="match status" value="1"/>
</dbReference>
<protein>
    <recommendedName>
        <fullName evidence="1">DNA-directed RNA polymerase subunit beta'</fullName>
        <shortName evidence="1">RNAP subunit beta'</shortName>
        <ecNumber evidence="1">2.7.7.6</ecNumber>
    </recommendedName>
    <alternativeName>
        <fullName evidence="1">RNA polymerase subunit beta'</fullName>
    </alternativeName>
    <alternativeName>
        <fullName evidence="1">Transcriptase subunit beta'</fullName>
    </alternativeName>
</protein>
<gene>
    <name evidence="1" type="primary">rpoC</name>
    <name type="ordered locus">Bcep1808_0323</name>
</gene>
<name>RPOC_BURVG</name>
<reference key="1">
    <citation type="submission" date="2007-03" db="EMBL/GenBank/DDBJ databases">
        <title>Complete sequence of chromosome 1 of Burkholderia vietnamiensis G4.</title>
        <authorList>
            <consortium name="US DOE Joint Genome Institute"/>
            <person name="Copeland A."/>
            <person name="Lucas S."/>
            <person name="Lapidus A."/>
            <person name="Barry K."/>
            <person name="Detter J.C."/>
            <person name="Glavina del Rio T."/>
            <person name="Hammon N."/>
            <person name="Israni S."/>
            <person name="Dalin E."/>
            <person name="Tice H."/>
            <person name="Pitluck S."/>
            <person name="Chain P."/>
            <person name="Malfatti S."/>
            <person name="Shin M."/>
            <person name="Vergez L."/>
            <person name="Schmutz J."/>
            <person name="Larimer F."/>
            <person name="Land M."/>
            <person name="Hauser L."/>
            <person name="Kyrpides N."/>
            <person name="Tiedje J."/>
            <person name="Richardson P."/>
        </authorList>
    </citation>
    <scope>NUCLEOTIDE SEQUENCE [LARGE SCALE GENOMIC DNA]</scope>
    <source>
        <strain>G4 / LMG 22486</strain>
    </source>
</reference>